<comment type="function">
    <text evidence="1">Catalyzes the NAD(P)H-dependent reduction of dihydroxyacetonephosphate (DHAP or glycerone phosphate) to glycerol 1-phosphate (G1P). The G1P thus generated is used as the glycerophosphate backbone of phospholipids in the cellular membranes of Archaea.</text>
</comment>
<comment type="catalytic activity">
    <reaction evidence="1">
        <text>sn-glycerol 1-phosphate + NAD(+) = dihydroxyacetone phosphate + NADH + H(+)</text>
        <dbReference type="Rhea" id="RHEA:21412"/>
        <dbReference type="ChEBI" id="CHEBI:15378"/>
        <dbReference type="ChEBI" id="CHEBI:57540"/>
        <dbReference type="ChEBI" id="CHEBI:57642"/>
        <dbReference type="ChEBI" id="CHEBI:57685"/>
        <dbReference type="ChEBI" id="CHEBI:57945"/>
        <dbReference type="EC" id="1.1.1.261"/>
    </reaction>
</comment>
<comment type="catalytic activity">
    <reaction evidence="1">
        <text>sn-glycerol 1-phosphate + NADP(+) = dihydroxyacetone phosphate + NADPH + H(+)</text>
        <dbReference type="Rhea" id="RHEA:21416"/>
        <dbReference type="ChEBI" id="CHEBI:15378"/>
        <dbReference type="ChEBI" id="CHEBI:57642"/>
        <dbReference type="ChEBI" id="CHEBI:57685"/>
        <dbReference type="ChEBI" id="CHEBI:57783"/>
        <dbReference type="ChEBI" id="CHEBI:58349"/>
        <dbReference type="EC" id="1.1.1.261"/>
    </reaction>
</comment>
<comment type="cofactor">
    <cofactor evidence="1">
        <name>Zn(2+)</name>
        <dbReference type="ChEBI" id="CHEBI:29105"/>
    </cofactor>
    <text evidence="1">Binds 1 zinc ion per subunit.</text>
</comment>
<comment type="pathway">
    <text evidence="1">Membrane lipid metabolism; glycerophospholipid metabolism.</text>
</comment>
<comment type="subcellular location">
    <subcellularLocation>
        <location evidence="1">Cytoplasm</location>
    </subcellularLocation>
</comment>
<comment type="similarity">
    <text evidence="1">Belongs to the glycerol-1-phosphate dehydrogenase family.</text>
</comment>
<protein>
    <recommendedName>
        <fullName evidence="1">Glycerol-1-phosphate dehydrogenase [NAD(P)+]</fullName>
        <shortName evidence="1">G1P dehydrogenase</shortName>
        <shortName evidence="1">G1PDH</shortName>
        <ecNumber evidence="1">1.1.1.261</ecNumber>
    </recommendedName>
    <alternativeName>
        <fullName evidence="1">Enantiomeric glycerophosphate synthase</fullName>
    </alternativeName>
    <alternativeName>
        <fullName evidence="1">sn-glycerol-1-phosphate dehydrogenase</fullName>
    </alternativeName>
</protein>
<evidence type="ECO:0000255" key="1">
    <source>
        <dbReference type="HAMAP-Rule" id="MF_00497"/>
    </source>
</evidence>
<organism>
    <name type="scientific">Halobacterium salinarum (strain ATCC 29341 / DSM 671 / R1)</name>
    <dbReference type="NCBI Taxonomy" id="478009"/>
    <lineage>
        <taxon>Archaea</taxon>
        <taxon>Methanobacteriati</taxon>
        <taxon>Methanobacteriota</taxon>
        <taxon>Stenosarchaea group</taxon>
        <taxon>Halobacteria</taxon>
        <taxon>Halobacteriales</taxon>
        <taxon>Halobacteriaceae</taxon>
        <taxon>Halobacterium</taxon>
        <taxon>Halobacterium salinarum NRC-34001</taxon>
    </lineage>
</organism>
<keyword id="KW-0963">Cytoplasm</keyword>
<keyword id="KW-0444">Lipid biosynthesis</keyword>
<keyword id="KW-0443">Lipid metabolism</keyword>
<keyword id="KW-0479">Metal-binding</keyword>
<keyword id="KW-0520">NAD</keyword>
<keyword id="KW-0521">NADP</keyword>
<keyword id="KW-0560">Oxidoreductase</keyword>
<keyword id="KW-0594">Phospholipid biosynthesis</keyword>
<keyword id="KW-1208">Phospholipid metabolism</keyword>
<keyword id="KW-0862">Zinc</keyword>
<name>G1PDH_HALS3</name>
<accession>B0R3A6</accession>
<proteinExistence type="inferred from homology"/>
<gene>
    <name evidence="1" type="primary">egsA</name>
    <name type="ordered locus">OE_1602F</name>
</gene>
<sequence length="352" mass="36711">MFEKSTWIRLPRNVVVGHGVLDDAVEVVRDTHLTGRPLVVTSPTPKTVAAENVVAQFEAVGDDPAVVVVEEATFNSVERVLGEAEAVDPGYLVGVGGGKAIDIAKLASDHLNVGFVSVPTAASHDGIVSGRGSVPEGDTRHSVSAAPPLAVIADTGVIADAPWELTTAGCADIISNYTAVKDWRLANRLQHVPYSEYAGALSQMTAEMLVDNAANIKPELEESAWVVVKALVSSGVAMSIADSSRPASGSEHLFSHQLDRIAPGKALHGHQVGVGSILAEYLHSGQEGQWMAVRDALASLDAPTTADELGVADDEVLAALTSAHEIRDRYTILGGGISEVAAREAASRTGVI</sequence>
<feature type="chain" id="PRO_0000350644" description="Glycerol-1-phosphate dehydrogenase [NAD(P)+]">
    <location>
        <begin position="1"/>
        <end position="352"/>
    </location>
</feature>
<feature type="binding site" evidence="1">
    <location>
        <begin position="98"/>
        <end position="102"/>
    </location>
    <ligand>
        <name>NAD(+)</name>
        <dbReference type="ChEBI" id="CHEBI:57540"/>
    </ligand>
</feature>
<feature type="binding site" evidence="1">
    <location>
        <begin position="120"/>
        <end position="123"/>
    </location>
    <ligand>
        <name>NAD(+)</name>
        <dbReference type="ChEBI" id="CHEBI:57540"/>
    </ligand>
</feature>
<feature type="binding site" evidence="1">
    <location>
        <position position="125"/>
    </location>
    <ligand>
        <name>substrate</name>
    </ligand>
</feature>
<feature type="binding site" evidence="1">
    <location>
        <position position="129"/>
    </location>
    <ligand>
        <name>NAD(+)</name>
        <dbReference type="ChEBI" id="CHEBI:57540"/>
    </ligand>
</feature>
<feature type="binding site" evidence="1">
    <location>
        <position position="172"/>
    </location>
    <ligand>
        <name>substrate</name>
    </ligand>
</feature>
<feature type="binding site" evidence="1">
    <location>
        <position position="172"/>
    </location>
    <ligand>
        <name>Zn(2+)</name>
        <dbReference type="ChEBI" id="CHEBI:29105"/>
        <note>catalytic</note>
    </ligand>
</feature>
<feature type="binding site" evidence="1">
    <location>
        <position position="252"/>
    </location>
    <ligand>
        <name>Zn(2+)</name>
        <dbReference type="ChEBI" id="CHEBI:29105"/>
        <note>catalytic</note>
    </ligand>
</feature>
<feature type="binding site" evidence="1">
    <location>
        <position position="256"/>
    </location>
    <ligand>
        <name>substrate</name>
    </ligand>
</feature>
<feature type="binding site" evidence="1">
    <location>
        <position position="268"/>
    </location>
    <ligand>
        <name>Zn(2+)</name>
        <dbReference type="ChEBI" id="CHEBI:29105"/>
        <note>catalytic</note>
    </ligand>
</feature>
<dbReference type="EC" id="1.1.1.261" evidence="1"/>
<dbReference type="EMBL" id="AM774415">
    <property type="protein sequence ID" value="CAP13220.1"/>
    <property type="molecule type" value="Genomic_DNA"/>
</dbReference>
<dbReference type="RefSeq" id="WP_010902254.1">
    <property type="nucleotide sequence ID" value="NC_010364.1"/>
</dbReference>
<dbReference type="SMR" id="B0R3A6"/>
<dbReference type="EnsemblBacteria" id="CAP13220">
    <property type="protein sequence ID" value="CAP13220"/>
    <property type="gene ID" value="OE_1602F"/>
</dbReference>
<dbReference type="KEGG" id="hsl:OE_1602F"/>
<dbReference type="HOGENOM" id="CLU_038362_0_0_2"/>
<dbReference type="PhylomeDB" id="B0R3A6"/>
<dbReference type="UniPathway" id="UPA00940"/>
<dbReference type="Proteomes" id="UP000001321">
    <property type="component" value="Chromosome"/>
</dbReference>
<dbReference type="GO" id="GO:0005737">
    <property type="term" value="C:cytoplasm"/>
    <property type="evidence" value="ECO:0007669"/>
    <property type="project" value="UniProtKB-SubCell"/>
</dbReference>
<dbReference type="GO" id="GO:0106357">
    <property type="term" value="F:glycerol-1-phosphate dehydrogenase (NAD+) activity"/>
    <property type="evidence" value="ECO:0007669"/>
    <property type="project" value="RHEA"/>
</dbReference>
<dbReference type="GO" id="GO:0106358">
    <property type="term" value="F:glycerol-1-phosphate dehydrogenase (NADP+) activity"/>
    <property type="evidence" value="ECO:0007669"/>
    <property type="project" value="RHEA"/>
</dbReference>
<dbReference type="GO" id="GO:0046872">
    <property type="term" value="F:metal ion binding"/>
    <property type="evidence" value="ECO:0007669"/>
    <property type="project" value="UniProtKB-KW"/>
</dbReference>
<dbReference type="GO" id="GO:0006650">
    <property type="term" value="P:glycerophospholipid metabolic process"/>
    <property type="evidence" value="ECO:0007669"/>
    <property type="project" value="UniProtKB-UniRule"/>
</dbReference>
<dbReference type="GO" id="GO:0008654">
    <property type="term" value="P:phospholipid biosynthetic process"/>
    <property type="evidence" value="ECO:0007669"/>
    <property type="project" value="UniProtKB-KW"/>
</dbReference>
<dbReference type="CDD" id="cd08173">
    <property type="entry name" value="Gro1PDH"/>
    <property type="match status" value="1"/>
</dbReference>
<dbReference type="Gene3D" id="3.40.50.1970">
    <property type="match status" value="1"/>
</dbReference>
<dbReference type="Gene3D" id="1.20.1090.10">
    <property type="entry name" value="Dehydroquinate synthase-like - alpha domain"/>
    <property type="match status" value="1"/>
</dbReference>
<dbReference type="HAMAP" id="MF_00497_A">
    <property type="entry name" value="G1P_dehydrogenase_A"/>
    <property type="match status" value="1"/>
</dbReference>
<dbReference type="InterPro" id="IPR023002">
    <property type="entry name" value="G1P_dehydrogenase_arc"/>
</dbReference>
<dbReference type="InterPro" id="IPR032837">
    <property type="entry name" value="G1PDH"/>
</dbReference>
<dbReference type="InterPro" id="IPR016205">
    <property type="entry name" value="Glycerol_DH"/>
</dbReference>
<dbReference type="NCBIfam" id="NF002022">
    <property type="entry name" value="PRK00843.1"/>
    <property type="match status" value="1"/>
</dbReference>
<dbReference type="PANTHER" id="PTHR43616">
    <property type="entry name" value="GLYCEROL DEHYDROGENASE"/>
    <property type="match status" value="1"/>
</dbReference>
<dbReference type="PANTHER" id="PTHR43616:SF5">
    <property type="entry name" value="GLYCEROL DEHYDROGENASE 1"/>
    <property type="match status" value="1"/>
</dbReference>
<dbReference type="Pfam" id="PF13685">
    <property type="entry name" value="Fe-ADH_2"/>
    <property type="match status" value="1"/>
</dbReference>
<dbReference type="PIRSF" id="PIRSF000112">
    <property type="entry name" value="Glycerol_dehydrogenase"/>
    <property type="match status" value="1"/>
</dbReference>
<dbReference type="SUPFAM" id="SSF56796">
    <property type="entry name" value="Dehydroquinate synthase-like"/>
    <property type="match status" value="1"/>
</dbReference>
<reference key="1">
    <citation type="journal article" date="2008" name="Genomics">
        <title>Evolution in the laboratory: the genome of Halobacterium salinarum strain R1 compared to that of strain NRC-1.</title>
        <authorList>
            <person name="Pfeiffer F."/>
            <person name="Schuster S.C."/>
            <person name="Broicher A."/>
            <person name="Falb M."/>
            <person name="Palm P."/>
            <person name="Rodewald K."/>
            <person name="Ruepp A."/>
            <person name="Soppa J."/>
            <person name="Tittor J."/>
            <person name="Oesterhelt D."/>
        </authorList>
    </citation>
    <scope>NUCLEOTIDE SEQUENCE [LARGE SCALE GENOMIC DNA]</scope>
    <source>
        <strain>ATCC 29341 / DSM 671 / R1</strain>
    </source>
</reference>